<comment type="function">
    <text evidence="4">Catalyzes the dephosphorylation of the nucleoside 5'-monophosphates deoxyadenosine monophosphate (dAMP), deoxycytidine monophosphate (dCMP), deoxyguanosine monophosphate (dGMP) and deoxythymidine monophosphate (dTMP).</text>
</comment>
<comment type="catalytic activity">
    <reaction evidence="4">
        <text>a 2'-deoxyribonucleoside 5'-phosphate + H2O = a 2'-deoxyribonucleoside + phosphate</text>
        <dbReference type="Rhea" id="RHEA:36167"/>
        <dbReference type="ChEBI" id="CHEBI:15377"/>
        <dbReference type="ChEBI" id="CHEBI:18274"/>
        <dbReference type="ChEBI" id="CHEBI:43474"/>
        <dbReference type="ChEBI" id="CHEBI:65317"/>
        <dbReference type="EC" id="3.1.3.89"/>
    </reaction>
</comment>
<comment type="cofactor">
    <cofactor evidence="4">
        <name>Mn(2+)</name>
        <dbReference type="ChEBI" id="CHEBI:29035"/>
    </cofactor>
    <cofactor evidence="4">
        <name>Co(2+)</name>
        <dbReference type="ChEBI" id="CHEBI:48828"/>
    </cofactor>
    <cofactor evidence="4">
        <name>Mg(2+)</name>
        <dbReference type="ChEBI" id="CHEBI:18420"/>
    </cofactor>
    <text evidence="1 4">Binds 2 divalent metal cations (By similarity). Shows activity with Mn(2+), Co(2+) and Mg(2+) but shows no activity with Zn(2+) (PubMed:29752939).</text>
</comment>
<comment type="biophysicochemical properties">
    <kinetics>
        <KM evidence="4">0.18 mM for dGMP</KM>
        <KM evidence="4">0.23 mM for dTMP</KM>
        <KM evidence="4">0.32 mM for dAMP</KM>
        <KM evidence="4">0.36 mM for dCMP</KM>
        <Vmax evidence="4">0.18 umol/min/mg enzyme toward dGMP</Vmax>
        <Vmax evidence="4">0.17 umol/min/mg enzyme toward dTMP</Vmax>
        <Vmax evidence="4">0.15 umol/min/mg enzyme toward dAMP</Vmax>
        <Vmax evidence="4">0.085 umol/min/mg enzyme toward dCMP</Vmax>
        <text evidence="4">kcat is 1.2 sec(-1) with dGMP as substrate. kcat is 1.1 sec(-1) with dTMP as substrate. kcat is 1.0 sec(-1) with dAMP as substrate. kcat is 0.28 sec(-1) with dCMP as substrate.</text>
    </kinetics>
</comment>
<comment type="subunit">
    <text evidence="4">Homodimer.</text>
</comment>
<comment type="miscellaneous">
    <text evidence="3">Present with 1500 molecules/cell in log phase SD medium.</text>
</comment>
<comment type="similarity">
    <text evidence="6">Belongs to the HDDC2 family.</text>
</comment>
<name>YGK1_YEAST</name>
<organism>
    <name type="scientific">Saccharomyces cerevisiae (strain ATCC 204508 / S288c)</name>
    <name type="common">Baker's yeast</name>
    <dbReference type="NCBI Taxonomy" id="559292"/>
    <lineage>
        <taxon>Eukaryota</taxon>
        <taxon>Fungi</taxon>
        <taxon>Dikarya</taxon>
        <taxon>Ascomycota</taxon>
        <taxon>Saccharomycotina</taxon>
        <taxon>Saccharomycetes</taxon>
        <taxon>Saccharomycetales</taxon>
        <taxon>Saccharomycetaceae</taxon>
        <taxon>Saccharomyces</taxon>
    </lineage>
</organism>
<feature type="chain" id="PRO_0000202754" description="5'-deoxynucleotidase YGK1">
    <location>
        <begin position="1"/>
        <end position="215"/>
    </location>
</feature>
<feature type="domain" description="HD" evidence="2">
    <location>
        <begin position="58"/>
        <end position="164"/>
    </location>
</feature>
<feature type="binding site" evidence="4 8">
    <location>
        <position position="61"/>
    </location>
    <ligand>
        <name>a divalent metal cation</name>
        <dbReference type="ChEBI" id="CHEBI:60240"/>
        <label>1</label>
    </ligand>
</feature>
<feature type="binding site" evidence="4 8">
    <location>
        <position position="89"/>
    </location>
    <ligand>
        <name>a divalent metal cation</name>
        <dbReference type="ChEBI" id="CHEBI:60240"/>
        <label>1</label>
    </ligand>
</feature>
<feature type="binding site" evidence="4 8">
    <location>
        <position position="90"/>
    </location>
    <ligand>
        <name>a divalent metal cation</name>
        <dbReference type="ChEBI" id="CHEBI:60240"/>
        <label>1</label>
    </ligand>
</feature>
<feature type="binding site" evidence="1">
    <location>
        <position position="93"/>
    </location>
    <ligand>
        <name>a divalent metal cation</name>
        <dbReference type="ChEBI" id="CHEBI:60240"/>
        <label>2</label>
    </ligand>
</feature>
<feature type="binding site" evidence="1">
    <location>
        <position position="98"/>
    </location>
    <ligand>
        <name>a divalent metal cation</name>
        <dbReference type="ChEBI" id="CHEBI:60240"/>
        <label>2</label>
    </ligand>
</feature>
<feature type="binding site" evidence="1">
    <location>
        <position position="99"/>
    </location>
    <ligand>
        <name>a divalent metal cation</name>
        <dbReference type="ChEBI" id="CHEBI:60240"/>
        <label>2</label>
    </ligand>
</feature>
<feature type="binding site" evidence="4 8">
    <location>
        <position position="159"/>
    </location>
    <ligand>
        <name>a divalent metal cation</name>
        <dbReference type="ChEBI" id="CHEBI:60240"/>
        <label>1</label>
    </ligand>
</feature>
<feature type="mutagenesis site" description="Abolishes activity." evidence="4">
    <original>H</original>
    <variation>A</variation>
    <location>
        <position position="89"/>
    </location>
</feature>
<feature type="mutagenesis site" description="Abolishes activity." evidence="4">
    <original>D</original>
    <variation>A</variation>
    <location>
        <position position="90"/>
    </location>
</feature>
<feature type="mutagenesis site" description="Abolishes activity." evidence="4">
    <original>E</original>
    <variation>A</variation>
    <location>
        <position position="93"/>
    </location>
</feature>
<feature type="mutagenesis site" description="No effect on activity." evidence="4">
    <original>H</original>
    <variation>A</variation>
    <location>
        <position position="111"/>
    </location>
</feature>
<feature type="mutagenesis site" description="Abolishes activity." evidence="4">
    <original>E</original>
    <variation>A</variation>
    <location>
        <position position="114"/>
    </location>
</feature>
<feature type="mutagenesis site" description="Abolishes activity." evidence="4">
    <original>E</original>
    <variation>A</variation>
    <location>
        <position position="145"/>
    </location>
</feature>
<feature type="helix" evidence="9">
    <location>
        <begin position="9"/>
        <end position="12"/>
    </location>
</feature>
<feature type="helix" evidence="9">
    <location>
        <begin position="15"/>
        <end position="21"/>
    </location>
</feature>
<feature type="strand" evidence="9">
    <location>
        <begin position="22"/>
        <end position="25"/>
    </location>
</feature>
<feature type="helix" evidence="9">
    <location>
        <begin position="28"/>
        <end position="37"/>
    </location>
</feature>
<feature type="helix" evidence="9">
    <location>
        <begin position="58"/>
        <end position="69"/>
    </location>
</feature>
<feature type="helix" evidence="9">
    <location>
        <begin position="79"/>
        <end position="89"/>
    </location>
</feature>
<feature type="helix" evidence="9">
    <location>
        <begin position="109"/>
        <end position="125"/>
    </location>
</feature>
<feature type="turn" evidence="9">
    <location>
        <begin position="126"/>
        <end position="129"/>
    </location>
</feature>
<feature type="helix" evidence="9">
    <location>
        <begin position="131"/>
        <end position="145"/>
    </location>
</feature>
<feature type="helix" evidence="9">
    <location>
        <begin position="150"/>
        <end position="172"/>
    </location>
</feature>
<feature type="strand" evidence="9">
    <location>
        <begin position="174"/>
        <end position="176"/>
    </location>
</feature>
<feature type="turn" evidence="9">
    <location>
        <begin position="181"/>
        <end position="185"/>
    </location>
</feature>
<feature type="helix" evidence="9">
    <location>
        <begin position="193"/>
        <end position="210"/>
    </location>
</feature>
<keyword id="KW-0002">3D-structure</keyword>
<keyword id="KW-0170">Cobalt</keyword>
<keyword id="KW-0378">Hydrolase</keyword>
<keyword id="KW-0460">Magnesium</keyword>
<keyword id="KW-0464">Manganese</keyword>
<keyword id="KW-0479">Metal-binding</keyword>
<keyword id="KW-1185">Reference proteome</keyword>
<gene>
    <name evidence="5 7" type="primary">YGK1</name>
    <name evidence="7" type="ordered locus">YGL101W</name>
</gene>
<accession>P53144</accession>
<accession>D6VU44</accession>
<evidence type="ECO:0000250" key="1">
    <source>
        <dbReference type="UniProtKB" id="Q7Z4H3"/>
    </source>
</evidence>
<evidence type="ECO:0000255" key="2">
    <source>
        <dbReference type="PROSITE-ProRule" id="PRU01175"/>
    </source>
</evidence>
<evidence type="ECO:0000269" key="3">
    <source>
    </source>
</evidence>
<evidence type="ECO:0000269" key="4">
    <source>
    </source>
</evidence>
<evidence type="ECO:0000303" key="5">
    <source>
    </source>
</evidence>
<evidence type="ECO:0000305" key="6"/>
<evidence type="ECO:0000312" key="7">
    <source>
        <dbReference type="SGD" id="S000003069"/>
    </source>
</evidence>
<evidence type="ECO:0007744" key="8">
    <source>
        <dbReference type="PDB" id="5YOX"/>
    </source>
</evidence>
<evidence type="ECO:0007829" key="9">
    <source>
        <dbReference type="PDB" id="5YOX"/>
    </source>
</evidence>
<sequence length="215" mass="25297">MTAVNIWKPEDNIPREILAILSKPHPNYQLAFLNIIQLLKTQRRTGWVDHGIDPCESISDHMYRMGLTTMLITDKNVDRNKCIRIALVHDFAESLVGDITPNDPMTKEEKHRREFETVKYLCESIIRPCSESASREILDDWLAYEKQTCLEGRYVKDIDKYEMLVQCFEYEQKYNGKKDLKQFLGAINDIKTDEVKKWTQSLLEDRQAFFDSLKE</sequence>
<dbReference type="EC" id="3.1.3.89" evidence="4"/>
<dbReference type="EMBL" id="Z72623">
    <property type="protein sequence ID" value="CAA96807.1"/>
    <property type="molecule type" value="Genomic_DNA"/>
</dbReference>
<dbReference type="EMBL" id="BK006941">
    <property type="protein sequence ID" value="DAA08005.1"/>
    <property type="molecule type" value="Genomic_DNA"/>
</dbReference>
<dbReference type="PIR" id="S64108">
    <property type="entry name" value="S64108"/>
</dbReference>
<dbReference type="RefSeq" id="NP_011414.1">
    <property type="nucleotide sequence ID" value="NM_001180966.1"/>
</dbReference>
<dbReference type="PDB" id="5YOX">
    <property type="method" value="X-ray"/>
    <property type="resolution" value="2.61 A"/>
    <property type="chains" value="A/B/C/D/E/F/G/H=1-215"/>
</dbReference>
<dbReference type="PDBsum" id="5YOX"/>
<dbReference type="SMR" id="P53144"/>
<dbReference type="BioGRID" id="33148">
    <property type="interactions" value="53"/>
</dbReference>
<dbReference type="FunCoup" id="P53144">
    <property type="interactions" value="249"/>
</dbReference>
<dbReference type="IntAct" id="P53144">
    <property type="interactions" value="1"/>
</dbReference>
<dbReference type="STRING" id="4932.YGL101W"/>
<dbReference type="iPTMnet" id="P53144"/>
<dbReference type="PaxDb" id="4932-YGL101W"/>
<dbReference type="PeptideAtlas" id="P53144"/>
<dbReference type="EnsemblFungi" id="YGL101W_mRNA">
    <property type="protein sequence ID" value="YGL101W"/>
    <property type="gene ID" value="YGL101W"/>
</dbReference>
<dbReference type="GeneID" id="852777"/>
<dbReference type="KEGG" id="sce:YGL101W"/>
<dbReference type="AGR" id="SGD:S000003069"/>
<dbReference type="SGD" id="S000003069">
    <property type="gene designation" value="YGK1"/>
</dbReference>
<dbReference type="VEuPathDB" id="FungiDB:YGL101W"/>
<dbReference type="eggNOG" id="KOG3197">
    <property type="taxonomic scope" value="Eukaryota"/>
</dbReference>
<dbReference type="GeneTree" id="ENSGT00390000009937"/>
<dbReference type="HOGENOM" id="CLU_039453_2_0_1"/>
<dbReference type="InParanoid" id="P53144"/>
<dbReference type="OMA" id="VEYREQG"/>
<dbReference type="OrthoDB" id="10254258at2759"/>
<dbReference type="BioCyc" id="YEAST:G3O-30601-MONOMER"/>
<dbReference type="BRENDA" id="3.1.3.89">
    <property type="organism ID" value="984"/>
</dbReference>
<dbReference type="SABIO-RK" id="P53144"/>
<dbReference type="BioGRID-ORCS" id="852777">
    <property type="hits" value="0 hits in 10 CRISPR screens"/>
</dbReference>
<dbReference type="PRO" id="PR:P53144"/>
<dbReference type="Proteomes" id="UP000002311">
    <property type="component" value="Chromosome VII"/>
</dbReference>
<dbReference type="RNAct" id="P53144">
    <property type="molecule type" value="protein"/>
</dbReference>
<dbReference type="GO" id="GO:0005737">
    <property type="term" value="C:cytoplasm"/>
    <property type="evidence" value="ECO:0007005"/>
    <property type="project" value="SGD"/>
</dbReference>
<dbReference type="GO" id="GO:0005634">
    <property type="term" value="C:nucleus"/>
    <property type="evidence" value="ECO:0007005"/>
    <property type="project" value="SGD"/>
</dbReference>
<dbReference type="GO" id="GO:0002953">
    <property type="term" value="F:5'-deoxynucleotidase activity"/>
    <property type="evidence" value="ECO:0000314"/>
    <property type="project" value="SGD"/>
</dbReference>
<dbReference type="GO" id="GO:0050484">
    <property type="term" value="F:GMP 5'-nucleotidase activity"/>
    <property type="evidence" value="ECO:0000314"/>
    <property type="project" value="SGD"/>
</dbReference>
<dbReference type="GO" id="GO:0046872">
    <property type="term" value="F:metal ion binding"/>
    <property type="evidence" value="ECO:0007669"/>
    <property type="project" value="UniProtKB-KW"/>
</dbReference>
<dbReference type="GO" id="GO:0009159">
    <property type="term" value="P:deoxyribonucleoside monophosphate catabolic process"/>
    <property type="evidence" value="ECO:0000314"/>
    <property type="project" value="SGD"/>
</dbReference>
<dbReference type="FunFam" id="1.10.3210.10:FF:000011">
    <property type="entry name" value="HD domain-containing protein 2"/>
    <property type="match status" value="1"/>
</dbReference>
<dbReference type="Gene3D" id="1.10.3210.10">
    <property type="entry name" value="Hypothetical protein af1432"/>
    <property type="match status" value="1"/>
</dbReference>
<dbReference type="InterPro" id="IPR003607">
    <property type="entry name" value="HD/PDEase_dom"/>
</dbReference>
<dbReference type="InterPro" id="IPR006674">
    <property type="entry name" value="HD_domain"/>
</dbReference>
<dbReference type="InterPro" id="IPR039356">
    <property type="entry name" value="YfbR/HDDC2"/>
</dbReference>
<dbReference type="PANTHER" id="PTHR11845">
    <property type="entry name" value="5'-DEOXYNUCLEOTIDASE HDDC2"/>
    <property type="match status" value="1"/>
</dbReference>
<dbReference type="PANTHER" id="PTHR11845:SF13">
    <property type="entry name" value="5'-DEOXYNUCLEOTIDASE HDDC2"/>
    <property type="match status" value="1"/>
</dbReference>
<dbReference type="Pfam" id="PF13023">
    <property type="entry name" value="HD_3"/>
    <property type="match status" value="1"/>
</dbReference>
<dbReference type="SMART" id="SM00471">
    <property type="entry name" value="HDc"/>
    <property type="match status" value="1"/>
</dbReference>
<dbReference type="SUPFAM" id="SSF109604">
    <property type="entry name" value="HD-domain/PDEase-like"/>
    <property type="match status" value="1"/>
</dbReference>
<dbReference type="PROSITE" id="PS51831">
    <property type="entry name" value="HD"/>
    <property type="match status" value="1"/>
</dbReference>
<proteinExistence type="evidence at protein level"/>
<reference key="1">
    <citation type="journal article" date="1997" name="Yeast">
        <title>Sequence analysis of 203 kilobases from Saccharomyces cerevisiae chromosome VII.</title>
        <authorList>
            <person name="Rieger M."/>
            <person name="Brueckner M."/>
            <person name="Schaefer M."/>
            <person name="Mueller-Auer S."/>
        </authorList>
    </citation>
    <scope>NUCLEOTIDE SEQUENCE [GENOMIC DNA]</scope>
    <source>
        <strain>ATCC 204508 / S288c</strain>
    </source>
</reference>
<reference key="2">
    <citation type="journal article" date="1997" name="Nature">
        <title>The nucleotide sequence of Saccharomyces cerevisiae chromosome VII.</title>
        <authorList>
            <person name="Tettelin H."/>
            <person name="Agostoni-Carbone M.L."/>
            <person name="Albermann K."/>
            <person name="Albers M."/>
            <person name="Arroyo J."/>
            <person name="Backes U."/>
            <person name="Barreiros T."/>
            <person name="Bertani I."/>
            <person name="Bjourson A.J."/>
            <person name="Brueckner M."/>
            <person name="Bruschi C.V."/>
            <person name="Carignani G."/>
            <person name="Castagnoli L."/>
            <person name="Cerdan E."/>
            <person name="Clemente M.L."/>
            <person name="Coblenz A."/>
            <person name="Coglievina M."/>
            <person name="Coissac E."/>
            <person name="Defoor E."/>
            <person name="Del Bino S."/>
            <person name="Delius H."/>
            <person name="Delneri D."/>
            <person name="de Wergifosse P."/>
            <person name="Dujon B."/>
            <person name="Durand P."/>
            <person name="Entian K.-D."/>
            <person name="Eraso P."/>
            <person name="Escribano V."/>
            <person name="Fabiani L."/>
            <person name="Fartmann B."/>
            <person name="Feroli F."/>
            <person name="Feuermann M."/>
            <person name="Frontali L."/>
            <person name="Garcia-Gonzalez M."/>
            <person name="Garcia-Saez M.I."/>
            <person name="Goffeau A."/>
            <person name="Guerreiro P."/>
            <person name="Hani J."/>
            <person name="Hansen M."/>
            <person name="Hebling U."/>
            <person name="Hernandez K."/>
            <person name="Heumann K."/>
            <person name="Hilger F."/>
            <person name="Hofmann B."/>
            <person name="Indge K.J."/>
            <person name="James C.M."/>
            <person name="Klima R."/>
            <person name="Koetter P."/>
            <person name="Kramer B."/>
            <person name="Kramer W."/>
            <person name="Lauquin G."/>
            <person name="Leuther H."/>
            <person name="Louis E.J."/>
            <person name="Maillier E."/>
            <person name="Marconi A."/>
            <person name="Martegani E."/>
            <person name="Mazon M.J."/>
            <person name="Mazzoni C."/>
            <person name="McReynolds A.D.K."/>
            <person name="Melchioretto P."/>
            <person name="Mewes H.-W."/>
            <person name="Minenkova O."/>
            <person name="Mueller-Auer S."/>
            <person name="Nawrocki A."/>
            <person name="Netter P."/>
            <person name="Neu R."/>
            <person name="Nombela C."/>
            <person name="Oliver S.G."/>
            <person name="Panzeri L."/>
            <person name="Paoluzi S."/>
            <person name="Plevani P."/>
            <person name="Portetelle D."/>
            <person name="Portillo F."/>
            <person name="Potier S."/>
            <person name="Purnelle B."/>
            <person name="Rieger M."/>
            <person name="Riles L."/>
            <person name="Rinaldi T."/>
            <person name="Robben J."/>
            <person name="Rodrigues-Pousada C."/>
            <person name="Rodriguez-Belmonte E."/>
            <person name="Rodriguez-Torres A.M."/>
            <person name="Rose M."/>
            <person name="Ruzzi M."/>
            <person name="Saliola M."/>
            <person name="Sanchez-Perez M."/>
            <person name="Schaefer B."/>
            <person name="Schaefer M."/>
            <person name="Scharfe M."/>
            <person name="Schmidheini T."/>
            <person name="Schreer A."/>
            <person name="Skala J."/>
            <person name="Souciet J.-L."/>
            <person name="Steensma H.Y."/>
            <person name="Talla E."/>
            <person name="Thierry A."/>
            <person name="Vandenbol M."/>
            <person name="van der Aart Q.J.M."/>
            <person name="Van Dyck L."/>
            <person name="Vanoni M."/>
            <person name="Verhasselt P."/>
            <person name="Voet M."/>
            <person name="Volckaert G."/>
            <person name="Wambutt R."/>
            <person name="Watson M.D."/>
            <person name="Weber N."/>
            <person name="Wedler E."/>
            <person name="Wedler H."/>
            <person name="Wipfli P."/>
            <person name="Wolf K."/>
            <person name="Wright L.F."/>
            <person name="Zaccaria P."/>
            <person name="Zimmermann M."/>
            <person name="Zollner A."/>
            <person name="Kleine K."/>
        </authorList>
    </citation>
    <scope>NUCLEOTIDE SEQUENCE [LARGE SCALE GENOMIC DNA]</scope>
    <source>
        <strain>ATCC 204508 / S288c</strain>
    </source>
</reference>
<reference key="3">
    <citation type="journal article" date="2014" name="G3 (Bethesda)">
        <title>The reference genome sequence of Saccharomyces cerevisiae: Then and now.</title>
        <authorList>
            <person name="Engel S.R."/>
            <person name="Dietrich F.S."/>
            <person name="Fisk D.G."/>
            <person name="Binkley G."/>
            <person name="Balakrishnan R."/>
            <person name="Costanzo M.C."/>
            <person name="Dwight S.S."/>
            <person name="Hitz B.C."/>
            <person name="Karra K."/>
            <person name="Nash R.S."/>
            <person name="Weng S."/>
            <person name="Wong E.D."/>
            <person name="Lloyd P."/>
            <person name="Skrzypek M.S."/>
            <person name="Miyasato S.R."/>
            <person name="Simison M."/>
            <person name="Cherry J.M."/>
        </authorList>
    </citation>
    <scope>GENOME REANNOTATION</scope>
    <source>
        <strain>ATCC 204508 / S288c</strain>
    </source>
</reference>
<reference key="4">
    <citation type="journal article" date="2003" name="Nature">
        <title>Global analysis of protein expression in yeast.</title>
        <authorList>
            <person name="Ghaemmaghami S."/>
            <person name="Huh W.-K."/>
            <person name="Bower K."/>
            <person name="Howson R.W."/>
            <person name="Belle A."/>
            <person name="Dephoure N."/>
            <person name="O'Shea E.K."/>
            <person name="Weissman J.S."/>
        </authorList>
    </citation>
    <scope>LEVEL OF PROTEIN EXPRESSION [LARGE SCALE ANALYSIS]</scope>
</reference>
<reference key="5">
    <citation type="journal article" date="2018" name="Biochem. Biophys. Res. Commun.">
        <title>Structural and biochemical characterization of the yeast HD domain containing protein YGK1 reveals a metal-dependent nucleoside 5'-monophosphatase.</title>
        <authorList>
            <person name="Yang J."/>
            <person name="Wang F."/>
            <person name="Yang D."/>
            <person name="Zhou K."/>
            <person name="Liu M."/>
            <person name="Gao Z."/>
            <person name="Liu P."/>
            <person name="Dong Y."/>
            <person name="Zhang J."/>
            <person name="Liu Q."/>
        </authorList>
    </citation>
    <scope>X-RAY CRYSTALLOGRAPHY (2.61 ANGSTROMS) IN COMPLEX WITH ZINC</scope>
    <scope>FUNCTION</scope>
    <scope>CATALYTIC ACTIVITY</scope>
    <scope>COFACTOR</scope>
    <scope>BIOPHYSICOCHEMICAL PROPERTIES</scope>
    <scope>MUTAGENESIS OF HIS-89; ASP-90; GLU-93; HIS-111; GLU-114 AND GLU-145</scope>
</reference>
<protein>
    <recommendedName>
        <fullName evidence="6">5'-deoxynucleotidase YGK1</fullName>
        <ecNumber evidence="4">3.1.3.89</ecNumber>
    </recommendedName>
</protein>